<dbReference type="EMBL" id="CP000524">
    <property type="protein sequence ID" value="ABM44729.1"/>
    <property type="molecule type" value="Genomic_DNA"/>
</dbReference>
<dbReference type="RefSeq" id="WP_005768069.1">
    <property type="nucleotide sequence ID" value="NC_008783.1"/>
</dbReference>
<dbReference type="SMR" id="A1UU92"/>
<dbReference type="STRING" id="360095.BARBAKC583_1296"/>
<dbReference type="GeneID" id="4685103"/>
<dbReference type="KEGG" id="bbk:BARBAKC583_1296"/>
<dbReference type="PATRIC" id="fig|360095.6.peg.1270"/>
<dbReference type="eggNOG" id="COG1952">
    <property type="taxonomic scope" value="Bacteria"/>
</dbReference>
<dbReference type="HOGENOM" id="CLU_111574_0_0_5"/>
<dbReference type="OrthoDB" id="9795145at2"/>
<dbReference type="Proteomes" id="UP000000643">
    <property type="component" value="Chromosome"/>
</dbReference>
<dbReference type="GO" id="GO:0005737">
    <property type="term" value="C:cytoplasm"/>
    <property type="evidence" value="ECO:0007669"/>
    <property type="project" value="UniProtKB-SubCell"/>
</dbReference>
<dbReference type="GO" id="GO:0051082">
    <property type="term" value="F:unfolded protein binding"/>
    <property type="evidence" value="ECO:0007669"/>
    <property type="project" value="InterPro"/>
</dbReference>
<dbReference type="GO" id="GO:0006457">
    <property type="term" value="P:protein folding"/>
    <property type="evidence" value="ECO:0007669"/>
    <property type="project" value="UniProtKB-UniRule"/>
</dbReference>
<dbReference type="GO" id="GO:0051262">
    <property type="term" value="P:protein tetramerization"/>
    <property type="evidence" value="ECO:0007669"/>
    <property type="project" value="InterPro"/>
</dbReference>
<dbReference type="GO" id="GO:0015031">
    <property type="term" value="P:protein transport"/>
    <property type="evidence" value="ECO:0007669"/>
    <property type="project" value="UniProtKB-UniRule"/>
</dbReference>
<dbReference type="Gene3D" id="3.10.420.10">
    <property type="entry name" value="SecB-like"/>
    <property type="match status" value="1"/>
</dbReference>
<dbReference type="HAMAP" id="MF_00821">
    <property type="entry name" value="SecB"/>
    <property type="match status" value="1"/>
</dbReference>
<dbReference type="InterPro" id="IPR003708">
    <property type="entry name" value="SecB"/>
</dbReference>
<dbReference type="InterPro" id="IPR035958">
    <property type="entry name" value="SecB-like_sf"/>
</dbReference>
<dbReference type="NCBIfam" id="NF004392">
    <property type="entry name" value="PRK05751.1-3"/>
    <property type="match status" value="1"/>
</dbReference>
<dbReference type="NCBIfam" id="TIGR00809">
    <property type="entry name" value="secB"/>
    <property type="match status" value="1"/>
</dbReference>
<dbReference type="PANTHER" id="PTHR36918">
    <property type="match status" value="1"/>
</dbReference>
<dbReference type="PANTHER" id="PTHR36918:SF1">
    <property type="entry name" value="PROTEIN-EXPORT PROTEIN SECB"/>
    <property type="match status" value="1"/>
</dbReference>
<dbReference type="Pfam" id="PF02556">
    <property type="entry name" value="SecB"/>
    <property type="match status" value="1"/>
</dbReference>
<dbReference type="PRINTS" id="PR01594">
    <property type="entry name" value="SECBCHAPRONE"/>
</dbReference>
<dbReference type="SUPFAM" id="SSF54611">
    <property type="entry name" value="SecB-like"/>
    <property type="match status" value="1"/>
</dbReference>
<sequence length="159" mass="18031">MAQGGEINNDNEKPIFAVLTQYLKDLSFENPNAPRSLRPREKSPKIDININVDANPVGDDNYDVVLSLSVKADDDNDILFHVELVYGGVFHIQNIPQEHIMPLVFIECPRLLFPFVRQIISDATQNGGFPPLWIDPIDFVTLFQRRITAEQKDKPTQSS</sequence>
<gene>
    <name evidence="1" type="primary">secB</name>
    <name type="ordered locus">BARBAKC583_1296</name>
</gene>
<reference key="1">
    <citation type="submission" date="2006-12" db="EMBL/GenBank/DDBJ databases">
        <authorList>
            <person name="Hendrix L."/>
            <person name="Mohamoud Y."/>
            <person name="Radune D."/>
            <person name="Shvartsbeyn A."/>
            <person name="Daugherty S."/>
            <person name="Dodson R."/>
            <person name="Durkin A.S."/>
            <person name="Harkins D."/>
            <person name="Huot H."/>
            <person name="Kothari S.P."/>
            <person name="Madupu R."/>
            <person name="Li J."/>
            <person name="Nelson W.C."/>
            <person name="Shrivastava S."/>
            <person name="Giglio M.G."/>
            <person name="Haft D."/>
            <person name="Selengut J."/>
            <person name="Fraser-Ligget C."/>
            <person name="Seshadri R."/>
        </authorList>
    </citation>
    <scope>NUCLEOTIDE SEQUENCE [LARGE SCALE GENOMIC DNA]</scope>
    <source>
        <strain>ATCC 35685 / KC583 / Herrer 020/F12,63</strain>
    </source>
</reference>
<proteinExistence type="inferred from homology"/>
<organism>
    <name type="scientific">Bartonella bacilliformis (strain ATCC 35685 / KC583 / Herrer 020/F12,63)</name>
    <dbReference type="NCBI Taxonomy" id="360095"/>
    <lineage>
        <taxon>Bacteria</taxon>
        <taxon>Pseudomonadati</taxon>
        <taxon>Pseudomonadota</taxon>
        <taxon>Alphaproteobacteria</taxon>
        <taxon>Hyphomicrobiales</taxon>
        <taxon>Bartonellaceae</taxon>
        <taxon>Bartonella</taxon>
    </lineage>
</organism>
<protein>
    <recommendedName>
        <fullName evidence="1">Protein-export protein SecB</fullName>
    </recommendedName>
</protein>
<feature type="chain" id="PRO_1000062452" description="Protein-export protein SecB">
    <location>
        <begin position="1"/>
        <end position="159"/>
    </location>
</feature>
<accession>A1UU92</accession>
<name>SECB_BARBK</name>
<keyword id="KW-0143">Chaperone</keyword>
<keyword id="KW-0963">Cytoplasm</keyword>
<keyword id="KW-0653">Protein transport</keyword>
<keyword id="KW-0811">Translocation</keyword>
<keyword id="KW-0813">Transport</keyword>
<evidence type="ECO:0000255" key="1">
    <source>
        <dbReference type="HAMAP-Rule" id="MF_00821"/>
    </source>
</evidence>
<comment type="function">
    <text evidence="1">One of the proteins required for the normal export of preproteins out of the cell cytoplasm. It is a molecular chaperone that binds to a subset of precursor proteins, maintaining them in a translocation-competent state. It also specifically binds to its receptor SecA.</text>
</comment>
<comment type="subunit">
    <text evidence="1">Homotetramer, a dimer of dimers. One homotetramer interacts with 1 SecA dimer.</text>
</comment>
<comment type="subcellular location">
    <subcellularLocation>
        <location evidence="1">Cytoplasm</location>
    </subcellularLocation>
</comment>
<comment type="similarity">
    <text evidence="1">Belongs to the SecB family.</text>
</comment>